<reference key="1">
    <citation type="journal article" date="1970" name="Int. J. Protein Res.">
        <title>Peptides of normal human gastric juice.</title>
        <authorList>
            <person name="Heathcote J.G."/>
            <person name="Washington R.J."/>
        </authorList>
    </citation>
    <scope>PROTEIN SEQUENCE</scope>
</reference>
<feature type="peptide" id="PRO_0000021314" description="Gastric juice peptide 1">
    <location>
        <begin position="1"/>
        <end position="10"/>
    </location>
</feature>
<feature type="peptide" id="PRO_0000021315" description="Gastric juice peptide 2">
    <location>
        <begin position="2"/>
        <end position="10"/>
    </location>
</feature>
<accession>P01358</accession>
<proteinExistence type="evidence at protein level"/>
<name>GAJU_HUMAN</name>
<keyword id="KW-0903">Direct protein sequencing</keyword>
<dbReference type="PIR" id="A01628">
    <property type="entry name" value="GXHU1"/>
</dbReference>
<dbReference type="MIM" id="137220">
    <property type="type" value="gene"/>
</dbReference>
<dbReference type="Pharos" id="P01358">
    <property type="development level" value="Tdark"/>
</dbReference>
<dbReference type="GO" id="GO:0007586">
    <property type="term" value="P:digestion"/>
    <property type="evidence" value="ECO:0000303"/>
    <property type="project" value="UniProtKB"/>
</dbReference>
<comment type="caution">
    <text evidence="1">The peptide sequences have not been found in the complete proteome.</text>
</comment>
<organism>
    <name type="scientific">Homo sapiens</name>
    <name type="common">Human</name>
    <dbReference type="NCBI Taxonomy" id="9606"/>
    <lineage>
        <taxon>Eukaryota</taxon>
        <taxon>Metazoa</taxon>
        <taxon>Chordata</taxon>
        <taxon>Craniata</taxon>
        <taxon>Vertebrata</taxon>
        <taxon>Euteleostomi</taxon>
        <taxon>Mammalia</taxon>
        <taxon>Eutheria</taxon>
        <taxon>Euarchontoglires</taxon>
        <taxon>Primates</taxon>
        <taxon>Haplorrhini</taxon>
        <taxon>Catarrhini</taxon>
        <taxon>Hominidae</taxon>
        <taxon>Homo</taxon>
    </lineage>
</organism>
<protein>
    <recommendedName>
        <fullName>Gastric juice peptide 1</fullName>
    </recommendedName>
    <component>
        <recommendedName>
            <fullName>Gastric juice peptide 2</fullName>
        </recommendedName>
    </component>
</protein>
<sequence length="10" mass="1004">LAAGKVEDSD</sequence>
<evidence type="ECO:0000305" key="1"/>